<name>RSMG_BURPS</name>
<feature type="chain" id="PRO_0000335322" description="Ribosomal RNA small subunit methyltransferase G">
    <location>
        <begin position="1"/>
        <end position="230"/>
    </location>
</feature>
<feature type="binding site" evidence="1">
    <location>
        <position position="91"/>
    </location>
    <ligand>
        <name>S-adenosyl-L-methionine</name>
        <dbReference type="ChEBI" id="CHEBI:59789"/>
    </ligand>
</feature>
<feature type="binding site" evidence="1">
    <location>
        <position position="96"/>
    </location>
    <ligand>
        <name>S-adenosyl-L-methionine</name>
        <dbReference type="ChEBI" id="CHEBI:59789"/>
    </ligand>
</feature>
<feature type="binding site" evidence="1">
    <location>
        <begin position="142"/>
        <end position="143"/>
    </location>
    <ligand>
        <name>S-adenosyl-L-methionine</name>
        <dbReference type="ChEBI" id="CHEBI:59789"/>
    </ligand>
</feature>
<feature type="binding site" evidence="1">
    <location>
        <position position="161"/>
    </location>
    <ligand>
        <name>S-adenosyl-L-methionine</name>
        <dbReference type="ChEBI" id="CHEBI:59789"/>
    </ligand>
</feature>
<accession>Q63PG9</accession>
<keyword id="KW-0963">Cytoplasm</keyword>
<keyword id="KW-0489">Methyltransferase</keyword>
<keyword id="KW-1185">Reference proteome</keyword>
<keyword id="KW-0698">rRNA processing</keyword>
<keyword id="KW-0949">S-adenosyl-L-methionine</keyword>
<keyword id="KW-0808">Transferase</keyword>
<protein>
    <recommendedName>
        <fullName evidence="1">Ribosomal RNA small subunit methyltransferase G</fullName>
        <ecNumber evidence="1">2.1.1.170</ecNumber>
    </recommendedName>
    <alternativeName>
        <fullName evidence="1">16S rRNA 7-methylguanosine methyltransferase</fullName>
        <shortName evidence="1">16S rRNA m7G methyltransferase</shortName>
    </alternativeName>
</protein>
<organism>
    <name type="scientific">Burkholderia pseudomallei (strain K96243)</name>
    <dbReference type="NCBI Taxonomy" id="272560"/>
    <lineage>
        <taxon>Bacteria</taxon>
        <taxon>Pseudomonadati</taxon>
        <taxon>Pseudomonadota</taxon>
        <taxon>Betaproteobacteria</taxon>
        <taxon>Burkholderiales</taxon>
        <taxon>Burkholderiaceae</taxon>
        <taxon>Burkholderia</taxon>
        <taxon>pseudomallei group</taxon>
    </lineage>
</organism>
<gene>
    <name evidence="1" type="primary">rsmG</name>
    <name type="ordered locus">BPSL3407</name>
</gene>
<evidence type="ECO:0000255" key="1">
    <source>
        <dbReference type="HAMAP-Rule" id="MF_00074"/>
    </source>
</evidence>
<sequence>MQQRRRPPIASRETLQALLSEGAQALGVALSDAQRGALLDYVALLAKWNAVYNLTAIRDPRQMLIQHILDSLSIVPHLGAHGAAAAALDVGSGGGLPGVVLAIALPGWRVTLNDIVHKKSAFQNQAKAELKLGNLSVVTGRVETLRPGADVPAKFDVIVSRAFADLADFVTLARHLVAPGGSIWAMKGVRPDEEIGRLPDGARVKQMIRLTVPSLDAERHLIEVELDEAI</sequence>
<comment type="function">
    <text evidence="1">Specifically methylates the N7 position of guanine in position 527 of 16S rRNA.</text>
</comment>
<comment type="catalytic activity">
    <reaction evidence="1">
        <text>guanosine(527) in 16S rRNA + S-adenosyl-L-methionine = N(7)-methylguanosine(527) in 16S rRNA + S-adenosyl-L-homocysteine</text>
        <dbReference type="Rhea" id="RHEA:42732"/>
        <dbReference type="Rhea" id="RHEA-COMP:10209"/>
        <dbReference type="Rhea" id="RHEA-COMP:10210"/>
        <dbReference type="ChEBI" id="CHEBI:57856"/>
        <dbReference type="ChEBI" id="CHEBI:59789"/>
        <dbReference type="ChEBI" id="CHEBI:74269"/>
        <dbReference type="ChEBI" id="CHEBI:74480"/>
        <dbReference type="EC" id="2.1.1.170"/>
    </reaction>
</comment>
<comment type="subcellular location">
    <subcellularLocation>
        <location evidence="1">Cytoplasm</location>
    </subcellularLocation>
</comment>
<comment type="similarity">
    <text evidence="1">Belongs to the methyltransferase superfamily. RNA methyltransferase RsmG family.</text>
</comment>
<proteinExistence type="inferred from homology"/>
<dbReference type="EC" id="2.1.1.170" evidence="1"/>
<dbReference type="EMBL" id="BX571965">
    <property type="protein sequence ID" value="CAH37419.1"/>
    <property type="molecule type" value="Genomic_DNA"/>
</dbReference>
<dbReference type="RefSeq" id="YP_110000.1">
    <property type="nucleotide sequence ID" value="NC_006350.1"/>
</dbReference>
<dbReference type="SMR" id="Q63PG9"/>
<dbReference type="STRING" id="272560.BPSL3407"/>
<dbReference type="KEGG" id="bps:BPSL3407"/>
<dbReference type="PATRIC" id="fig|272560.6.peg.3876"/>
<dbReference type="eggNOG" id="COG0357">
    <property type="taxonomic scope" value="Bacteria"/>
</dbReference>
<dbReference type="Proteomes" id="UP000000605">
    <property type="component" value="Chromosome 1"/>
</dbReference>
<dbReference type="GO" id="GO:0005829">
    <property type="term" value="C:cytosol"/>
    <property type="evidence" value="ECO:0007669"/>
    <property type="project" value="TreeGrafter"/>
</dbReference>
<dbReference type="GO" id="GO:0070043">
    <property type="term" value="F:rRNA (guanine-N7-)-methyltransferase activity"/>
    <property type="evidence" value="ECO:0007669"/>
    <property type="project" value="UniProtKB-UniRule"/>
</dbReference>
<dbReference type="CDD" id="cd02440">
    <property type="entry name" value="AdoMet_MTases"/>
    <property type="match status" value="1"/>
</dbReference>
<dbReference type="Gene3D" id="3.40.50.150">
    <property type="entry name" value="Vaccinia Virus protein VP39"/>
    <property type="match status" value="1"/>
</dbReference>
<dbReference type="HAMAP" id="MF_00074">
    <property type="entry name" value="16SrRNA_methyltr_G"/>
    <property type="match status" value="1"/>
</dbReference>
<dbReference type="InterPro" id="IPR003682">
    <property type="entry name" value="rRNA_ssu_MeTfrase_G"/>
</dbReference>
<dbReference type="InterPro" id="IPR029063">
    <property type="entry name" value="SAM-dependent_MTases_sf"/>
</dbReference>
<dbReference type="NCBIfam" id="TIGR00138">
    <property type="entry name" value="rsmG_gidB"/>
    <property type="match status" value="1"/>
</dbReference>
<dbReference type="PANTHER" id="PTHR31760">
    <property type="entry name" value="S-ADENOSYL-L-METHIONINE-DEPENDENT METHYLTRANSFERASES SUPERFAMILY PROTEIN"/>
    <property type="match status" value="1"/>
</dbReference>
<dbReference type="PANTHER" id="PTHR31760:SF0">
    <property type="entry name" value="S-ADENOSYL-L-METHIONINE-DEPENDENT METHYLTRANSFERASES SUPERFAMILY PROTEIN"/>
    <property type="match status" value="1"/>
</dbReference>
<dbReference type="Pfam" id="PF02527">
    <property type="entry name" value="GidB"/>
    <property type="match status" value="1"/>
</dbReference>
<dbReference type="PIRSF" id="PIRSF003078">
    <property type="entry name" value="GidB"/>
    <property type="match status" value="1"/>
</dbReference>
<dbReference type="SUPFAM" id="SSF53335">
    <property type="entry name" value="S-adenosyl-L-methionine-dependent methyltransferases"/>
    <property type="match status" value="1"/>
</dbReference>
<reference key="1">
    <citation type="journal article" date="2004" name="Proc. Natl. Acad. Sci. U.S.A.">
        <title>Genomic plasticity of the causative agent of melioidosis, Burkholderia pseudomallei.</title>
        <authorList>
            <person name="Holden M.T.G."/>
            <person name="Titball R.W."/>
            <person name="Peacock S.J."/>
            <person name="Cerdeno-Tarraga A.-M."/>
            <person name="Atkins T."/>
            <person name="Crossman L.C."/>
            <person name="Pitt T."/>
            <person name="Churcher C."/>
            <person name="Mungall K.L."/>
            <person name="Bentley S.D."/>
            <person name="Sebaihia M."/>
            <person name="Thomson N.R."/>
            <person name="Bason N."/>
            <person name="Beacham I.R."/>
            <person name="Brooks K."/>
            <person name="Brown K.A."/>
            <person name="Brown N.F."/>
            <person name="Challis G.L."/>
            <person name="Cherevach I."/>
            <person name="Chillingworth T."/>
            <person name="Cronin A."/>
            <person name="Crossett B."/>
            <person name="Davis P."/>
            <person name="DeShazer D."/>
            <person name="Feltwell T."/>
            <person name="Fraser A."/>
            <person name="Hance Z."/>
            <person name="Hauser H."/>
            <person name="Holroyd S."/>
            <person name="Jagels K."/>
            <person name="Keith K.E."/>
            <person name="Maddison M."/>
            <person name="Moule S."/>
            <person name="Price C."/>
            <person name="Quail M.A."/>
            <person name="Rabbinowitsch E."/>
            <person name="Rutherford K."/>
            <person name="Sanders M."/>
            <person name="Simmonds M."/>
            <person name="Songsivilai S."/>
            <person name="Stevens K."/>
            <person name="Tumapa S."/>
            <person name="Vesaratchavest M."/>
            <person name="Whitehead S."/>
            <person name="Yeats C."/>
            <person name="Barrell B.G."/>
            <person name="Oyston P.C.F."/>
            <person name="Parkhill J."/>
        </authorList>
    </citation>
    <scope>NUCLEOTIDE SEQUENCE [LARGE SCALE GENOMIC DNA]</scope>
    <source>
        <strain>K96243</strain>
    </source>
</reference>